<name>MATK_PRUPE</name>
<feature type="chain" id="PRO_0000143654" description="Maturase K">
    <location>
        <begin position="1"/>
        <end position="506"/>
    </location>
</feature>
<sequence>MEEFQGYLELDRYQQHDFLYPLIFREYIYALAHDHGLNRSILLDNVGYDNKSSLLIIKRLISRMYKHNHFFISANASNQKKKLGYNKNLYSQKISEGFTVIVEISFSLRLVSSLEATETVKSYNLRSIHSIFPFLEDKFPHLNYVSDVLIPYPIHLEILVQTLRYWVKDASSLHLLRLFLHEYYNWNSLITSNNFFFSKSNPRLFLLLYNSHVCEYEFILLFLRNQSSHLQLTSSGIFFERIHFYEKIKYPVEKVFANDFPASILWFFKDPFMHYVRYQGKSILASKDTPLLMNKWKYYLVNLWQCHSYVWSQPGRIYINKLSKHSLDFLGYFSSIRPNLSVVRSQMLENSFITDNAMKKLDTLVPIIPLIGSLAKVKFCNALGHPISKSTWADSSDFDIIDRFLRICRNLSHYYSGSSRKKSLYRIKYILRLSCLKTLARKHKSTVRTFLKRLGSKLLEEFFTEEEQILSLVFPRASYTFTFKKLYRGRIWYLDIFCINDLINYE</sequence>
<keyword id="KW-0150">Chloroplast</keyword>
<keyword id="KW-0507">mRNA processing</keyword>
<keyword id="KW-0934">Plastid</keyword>
<keyword id="KW-0694">RNA-binding</keyword>
<keyword id="KW-0819">tRNA processing</keyword>
<dbReference type="EMBL" id="AF288117">
    <property type="protein sequence ID" value="AAL36011.1"/>
    <property type="molecule type" value="Genomic_DNA"/>
</dbReference>
<dbReference type="GO" id="GO:0009507">
    <property type="term" value="C:chloroplast"/>
    <property type="evidence" value="ECO:0007669"/>
    <property type="project" value="UniProtKB-SubCell"/>
</dbReference>
<dbReference type="GO" id="GO:0003723">
    <property type="term" value="F:RNA binding"/>
    <property type="evidence" value="ECO:0007669"/>
    <property type="project" value="UniProtKB-KW"/>
</dbReference>
<dbReference type="GO" id="GO:0006397">
    <property type="term" value="P:mRNA processing"/>
    <property type="evidence" value="ECO:0007669"/>
    <property type="project" value="UniProtKB-KW"/>
</dbReference>
<dbReference type="GO" id="GO:0008380">
    <property type="term" value="P:RNA splicing"/>
    <property type="evidence" value="ECO:0007669"/>
    <property type="project" value="UniProtKB-UniRule"/>
</dbReference>
<dbReference type="GO" id="GO:0008033">
    <property type="term" value="P:tRNA processing"/>
    <property type="evidence" value="ECO:0007669"/>
    <property type="project" value="UniProtKB-KW"/>
</dbReference>
<dbReference type="HAMAP" id="MF_01390">
    <property type="entry name" value="MatK"/>
    <property type="match status" value="1"/>
</dbReference>
<dbReference type="InterPro" id="IPR024937">
    <property type="entry name" value="Domain_X"/>
</dbReference>
<dbReference type="InterPro" id="IPR002866">
    <property type="entry name" value="Maturase_MatK"/>
</dbReference>
<dbReference type="InterPro" id="IPR024942">
    <property type="entry name" value="Maturase_MatK_N"/>
</dbReference>
<dbReference type="PANTHER" id="PTHR34811">
    <property type="entry name" value="MATURASE K"/>
    <property type="match status" value="1"/>
</dbReference>
<dbReference type="PANTHER" id="PTHR34811:SF1">
    <property type="entry name" value="MATURASE K"/>
    <property type="match status" value="1"/>
</dbReference>
<dbReference type="Pfam" id="PF01348">
    <property type="entry name" value="Intron_maturas2"/>
    <property type="match status" value="1"/>
</dbReference>
<dbReference type="Pfam" id="PF01824">
    <property type="entry name" value="MatK_N"/>
    <property type="match status" value="1"/>
</dbReference>
<accession>Q8WJP1</accession>
<gene>
    <name evidence="1" type="primary">matK</name>
</gene>
<evidence type="ECO:0000255" key="1">
    <source>
        <dbReference type="HAMAP-Rule" id="MF_01390"/>
    </source>
</evidence>
<protein>
    <recommendedName>
        <fullName evidence="1">Maturase K</fullName>
    </recommendedName>
    <alternativeName>
        <fullName evidence="1">Intron maturase</fullName>
    </alternativeName>
</protein>
<proteinExistence type="inferred from homology"/>
<organism>
    <name type="scientific">Prunus persica</name>
    <name type="common">Peach</name>
    <name type="synonym">Amygdalus persica</name>
    <dbReference type="NCBI Taxonomy" id="3760"/>
    <lineage>
        <taxon>Eukaryota</taxon>
        <taxon>Viridiplantae</taxon>
        <taxon>Streptophyta</taxon>
        <taxon>Embryophyta</taxon>
        <taxon>Tracheophyta</taxon>
        <taxon>Spermatophyta</taxon>
        <taxon>Magnoliopsida</taxon>
        <taxon>eudicotyledons</taxon>
        <taxon>Gunneridae</taxon>
        <taxon>Pentapetalae</taxon>
        <taxon>rosids</taxon>
        <taxon>fabids</taxon>
        <taxon>Rosales</taxon>
        <taxon>Rosaceae</taxon>
        <taxon>Amygdaloideae</taxon>
        <taxon>Amygdaleae</taxon>
        <taxon>Prunus</taxon>
    </lineage>
</organism>
<comment type="function">
    <text evidence="1">Usually encoded in the trnK tRNA gene intron. Probably assists in splicing its own and other chloroplast group II introns.</text>
</comment>
<comment type="subcellular location">
    <subcellularLocation>
        <location>Plastid</location>
        <location>Chloroplast</location>
    </subcellularLocation>
</comment>
<comment type="similarity">
    <text evidence="1">Belongs to the intron maturase 2 family. MatK subfamily.</text>
</comment>
<reference key="1">
    <citation type="submission" date="2000-07" db="EMBL/GenBank/DDBJ databases">
        <title>Phylogenetic relationships among putative genes encoding polygalacturonase inhibitor proteins (PGIPs) in Rosaceae.</title>
        <authorList>
            <person name="Potter D."/>
            <person name="Gao F."/>
            <person name="Oh S.-H."/>
            <person name="Baggett S."/>
        </authorList>
    </citation>
    <scope>NUCLEOTIDE SEQUENCE [GENOMIC DNA]</scope>
</reference>
<geneLocation type="chloroplast"/>